<reference key="1">
    <citation type="journal article" date="2005" name="Proc. Natl. Acad. Sci. U.S.A.">
        <title>The complete genome sequence of Mycobacterium avium subspecies paratuberculosis.</title>
        <authorList>
            <person name="Li L."/>
            <person name="Bannantine J.P."/>
            <person name="Zhang Q."/>
            <person name="Amonsin A."/>
            <person name="May B.J."/>
            <person name="Alt D."/>
            <person name="Banerji N."/>
            <person name="Kanjilal S."/>
            <person name="Kapur V."/>
        </authorList>
    </citation>
    <scope>NUCLEOTIDE SEQUENCE [LARGE SCALE GENOMIC DNA]</scope>
    <source>
        <strain>ATCC BAA-968 / K-10</strain>
    </source>
</reference>
<comment type="function">
    <text evidence="1">Binds directly to 16S ribosomal RNA.</text>
</comment>
<comment type="similarity">
    <text evidence="1">Belongs to the bacterial ribosomal protein bS20 family.</text>
</comment>
<protein>
    <recommendedName>
        <fullName evidence="1">Small ribosomal subunit protein bS20</fullName>
    </recommendedName>
    <alternativeName>
        <fullName evidence="3">30S ribosomal protein S20</fullName>
    </alternativeName>
</protein>
<feature type="chain" id="PRO_0000167994" description="Small ribosomal subunit protein bS20">
    <location>
        <begin position="1"/>
        <end position="86"/>
    </location>
</feature>
<feature type="region of interest" description="Disordered" evidence="2">
    <location>
        <begin position="1"/>
        <end position="25"/>
    </location>
</feature>
<name>RS20_MYCPA</name>
<sequence length="86" mass="9479">MANIKSQQKRNKTNERARLRNKSVKSSLRTAVRAFREAAHAGDKEKAAELLVSTNRKLDKAASKGVIHKNQAANKKSALAQALNKL</sequence>
<organism>
    <name type="scientific">Mycolicibacterium paratuberculosis (strain ATCC BAA-968 / K-10)</name>
    <name type="common">Mycobacterium paratuberculosis</name>
    <dbReference type="NCBI Taxonomy" id="262316"/>
    <lineage>
        <taxon>Bacteria</taxon>
        <taxon>Bacillati</taxon>
        <taxon>Actinomycetota</taxon>
        <taxon>Actinomycetes</taxon>
        <taxon>Mycobacteriales</taxon>
        <taxon>Mycobacteriaceae</taxon>
        <taxon>Mycobacterium</taxon>
        <taxon>Mycobacterium avium complex (MAC)</taxon>
    </lineage>
</organism>
<evidence type="ECO:0000255" key="1">
    <source>
        <dbReference type="HAMAP-Rule" id="MF_00500"/>
    </source>
</evidence>
<evidence type="ECO:0000256" key="2">
    <source>
        <dbReference type="SAM" id="MobiDB-lite"/>
    </source>
</evidence>
<evidence type="ECO:0000305" key="3"/>
<gene>
    <name evidence="1" type="primary">rpsT</name>
    <name type="ordered locus">MAP_2224</name>
</gene>
<accession>Q73XT5</accession>
<proteinExistence type="inferred from homology"/>
<dbReference type="EMBL" id="AE016958">
    <property type="protein sequence ID" value="AAS04541.1"/>
    <property type="molecule type" value="Genomic_DNA"/>
</dbReference>
<dbReference type="RefSeq" id="WP_003875905.1">
    <property type="nucleotide sequence ID" value="NZ_CP106873.1"/>
</dbReference>
<dbReference type="SMR" id="Q73XT5"/>
<dbReference type="STRING" id="262316.MAP_2224"/>
<dbReference type="KEGG" id="mpa:MAP_2224"/>
<dbReference type="eggNOG" id="COG0268">
    <property type="taxonomic scope" value="Bacteria"/>
</dbReference>
<dbReference type="HOGENOM" id="CLU_160655_0_1_11"/>
<dbReference type="Proteomes" id="UP000000580">
    <property type="component" value="Chromosome"/>
</dbReference>
<dbReference type="GO" id="GO:0005829">
    <property type="term" value="C:cytosol"/>
    <property type="evidence" value="ECO:0007669"/>
    <property type="project" value="TreeGrafter"/>
</dbReference>
<dbReference type="GO" id="GO:0015935">
    <property type="term" value="C:small ribosomal subunit"/>
    <property type="evidence" value="ECO:0007669"/>
    <property type="project" value="TreeGrafter"/>
</dbReference>
<dbReference type="GO" id="GO:0070181">
    <property type="term" value="F:small ribosomal subunit rRNA binding"/>
    <property type="evidence" value="ECO:0007669"/>
    <property type="project" value="TreeGrafter"/>
</dbReference>
<dbReference type="GO" id="GO:0003735">
    <property type="term" value="F:structural constituent of ribosome"/>
    <property type="evidence" value="ECO:0007669"/>
    <property type="project" value="InterPro"/>
</dbReference>
<dbReference type="GO" id="GO:0006412">
    <property type="term" value="P:translation"/>
    <property type="evidence" value="ECO:0007669"/>
    <property type="project" value="UniProtKB-UniRule"/>
</dbReference>
<dbReference type="FunFam" id="1.20.58.110:FF:000001">
    <property type="entry name" value="30S ribosomal protein S20"/>
    <property type="match status" value="1"/>
</dbReference>
<dbReference type="Gene3D" id="1.20.58.110">
    <property type="entry name" value="Ribosomal protein S20"/>
    <property type="match status" value="1"/>
</dbReference>
<dbReference type="HAMAP" id="MF_00500">
    <property type="entry name" value="Ribosomal_bS20"/>
    <property type="match status" value="1"/>
</dbReference>
<dbReference type="InterPro" id="IPR002583">
    <property type="entry name" value="Ribosomal_bS20"/>
</dbReference>
<dbReference type="InterPro" id="IPR036510">
    <property type="entry name" value="Ribosomal_bS20_sf"/>
</dbReference>
<dbReference type="NCBIfam" id="TIGR00029">
    <property type="entry name" value="S20"/>
    <property type="match status" value="1"/>
</dbReference>
<dbReference type="PANTHER" id="PTHR33398">
    <property type="entry name" value="30S RIBOSOMAL PROTEIN S20"/>
    <property type="match status" value="1"/>
</dbReference>
<dbReference type="PANTHER" id="PTHR33398:SF1">
    <property type="entry name" value="SMALL RIBOSOMAL SUBUNIT PROTEIN BS20C"/>
    <property type="match status" value="1"/>
</dbReference>
<dbReference type="Pfam" id="PF01649">
    <property type="entry name" value="Ribosomal_S20p"/>
    <property type="match status" value="1"/>
</dbReference>
<dbReference type="SUPFAM" id="SSF46992">
    <property type="entry name" value="Ribosomal protein S20"/>
    <property type="match status" value="1"/>
</dbReference>
<keyword id="KW-1185">Reference proteome</keyword>
<keyword id="KW-0687">Ribonucleoprotein</keyword>
<keyword id="KW-0689">Ribosomal protein</keyword>
<keyword id="KW-0694">RNA-binding</keyword>
<keyword id="KW-0699">rRNA-binding</keyword>